<feature type="chain" id="PRO_0000126264" description="Large ribosomal subunit protein bL36">
    <location>
        <begin position="1"/>
        <end position="37"/>
    </location>
</feature>
<comment type="similarity">
    <text evidence="1">Belongs to the bacterial ribosomal protein bL36 family.</text>
</comment>
<accession>Q5HM22</accession>
<sequence>MKVRPSVKPICEKCKVIKRKGKVMVICDNPKHKQRQG</sequence>
<gene>
    <name evidence="1" type="primary">rpmJ</name>
    <name type="ordered locus">SERP1808</name>
</gene>
<evidence type="ECO:0000255" key="1">
    <source>
        <dbReference type="HAMAP-Rule" id="MF_00251"/>
    </source>
</evidence>
<evidence type="ECO:0000305" key="2"/>
<protein>
    <recommendedName>
        <fullName evidence="1">Large ribosomal subunit protein bL36</fullName>
    </recommendedName>
    <alternativeName>
        <fullName evidence="2">50S ribosomal protein L36</fullName>
    </alternativeName>
</protein>
<organism>
    <name type="scientific">Staphylococcus epidermidis (strain ATCC 35984 / DSM 28319 / BCRC 17069 / CCUG 31568 / BM 3577 / RP62A)</name>
    <dbReference type="NCBI Taxonomy" id="176279"/>
    <lineage>
        <taxon>Bacteria</taxon>
        <taxon>Bacillati</taxon>
        <taxon>Bacillota</taxon>
        <taxon>Bacilli</taxon>
        <taxon>Bacillales</taxon>
        <taxon>Staphylococcaceae</taxon>
        <taxon>Staphylococcus</taxon>
    </lineage>
</organism>
<name>RL36_STAEQ</name>
<proteinExistence type="inferred from homology"/>
<reference key="1">
    <citation type="journal article" date="2005" name="J. Bacteriol.">
        <title>Insights on evolution of virulence and resistance from the complete genome analysis of an early methicillin-resistant Staphylococcus aureus strain and a biofilm-producing methicillin-resistant Staphylococcus epidermidis strain.</title>
        <authorList>
            <person name="Gill S.R."/>
            <person name="Fouts D.E."/>
            <person name="Archer G.L."/>
            <person name="Mongodin E.F."/>
            <person name="DeBoy R.T."/>
            <person name="Ravel J."/>
            <person name="Paulsen I.T."/>
            <person name="Kolonay J.F."/>
            <person name="Brinkac L.M."/>
            <person name="Beanan M.J."/>
            <person name="Dodson R.J."/>
            <person name="Daugherty S.C."/>
            <person name="Madupu R."/>
            <person name="Angiuoli S.V."/>
            <person name="Durkin A.S."/>
            <person name="Haft D.H."/>
            <person name="Vamathevan J.J."/>
            <person name="Khouri H."/>
            <person name="Utterback T.R."/>
            <person name="Lee C."/>
            <person name="Dimitrov G."/>
            <person name="Jiang L."/>
            <person name="Qin H."/>
            <person name="Weidman J."/>
            <person name="Tran K."/>
            <person name="Kang K.H."/>
            <person name="Hance I.R."/>
            <person name="Nelson K.E."/>
            <person name="Fraser C.M."/>
        </authorList>
    </citation>
    <scope>NUCLEOTIDE SEQUENCE [LARGE SCALE GENOMIC DNA]</scope>
    <source>
        <strain>ATCC 35984 / DSM 28319 / BCRC 17069 / CCUG 31568 / BM 3577 / RP62A</strain>
    </source>
</reference>
<keyword id="KW-1185">Reference proteome</keyword>
<keyword id="KW-0687">Ribonucleoprotein</keyword>
<keyword id="KW-0689">Ribosomal protein</keyword>
<dbReference type="EMBL" id="CP000029">
    <property type="protein sequence ID" value="AAW55124.1"/>
    <property type="molecule type" value="Genomic_DNA"/>
</dbReference>
<dbReference type="RefSeq" id="WP_001829709.1">
    <property type="nucleotide sequence ID" value="NC_002976.3"/>
</dbReference>
<dbReference type="SMR" id="Q5HM22"/>
<dbReference type="STRING" id="176279.SERP1808"/>
<dbReference type="GeneID" id="93780214"/>
<dbReference type="KEGG" id="ser:SERP1808"/>
<dbReference type="eggNOG" id="COG0257">
    <property type="taxonomic scope" value="Bacteria"/>
</dbReference>
<dbReference type="HOGENOM" id="CLU_135723_6_2_9"/>
<dbReference type="Proteomes" id="UP000000531">
    <property type="component" value="Chromosome"/>
</dbReference>
<dbReference type="GO" id="GO:0005737">
    <property type="term" value="C:cytoplasm"/>
    <property type="evidence" value="ECO:0007669"/>
    <property type="project" value="UniProtKB-ARBA"/>
</dbReference>
<dbReference type="GO" id="GO:1990904">
    <property type="term" value="C:ribonucleoprotein complex"/>
    <property type="evidence" value="ECO:0007669"/>
    <property type="project" value="UniProtKB-KW"/>
</dbReference>
<dbReference type="GO" id="GO:0005840">
    <property type="term" value="C:ribosome"/>
    <property type="evidence" value="ECO:0007669"/>
    <property type="project" value="UniProtKB-KW"/>
</dbReference>
<dbReference type="GO" id="GO:0003735">
    <property type="term" value="F:structural constituent of ribosome"/>
    <property type="evidence" value="ECO:0007669"/>
    <property type="project" value="InterPro"/>
</dbReference>
<dbReference type="GO" id="GO:0006412">
    <property type="term" value="P:translation"/>
    <property type="evidence" value="ECO:0007669"/>
    <property type="project" value="UniProtKB-UniRule"/>
</dbReference>
<dbReference type="HAMAP" id="MF_00251">
    <property type="entry name" value="Ribosomal_bL36"/>
    <property type="match status" value="1"/>
</dbReference>
<dbReference type="InterPro" id="IPR000473">
    <property type="entry name" value="Ribosomal_bL36"/>
</dbReference>
<dbReference type="InterPro" id="IPR035977">
    <property type="entry name" value="Ribosomal_bL36_sp"/>
</dbReference>
<dbReference type="NCBIfam" id="TIGR01022">
    <property type="entry name" value="rpmJ_bact"/>
    <property type="match status" value="1"/>
</dbReference>
<dbReference type="PANTHER" id="PTHR42888">
    <property type="entry name" value="50S RIBOSOMAL PROTEIN L36, CHLOROPLASTIC"/>
    <property type="match status" value="1"/>
</dbReference>
<dbReference type="PANTHER" id="PTHR42888:SF1">
    <property type="entry name" value="LARGE RIBOSOMAL SUBUNIT PROTEIN BL36C"/>
    <property type="match status" value="1"/>
</dbReference>
<dbReference type="Pfam" id="PF00444">
    <property type="entry name" value="Ribosomal_L36"/>
    <property type="match status" value="1"/>
</dbReference>
<dbReference type="SUPFAM" id="SSF57840">
    <property type="entry name" value="Ribosomal protein L36"/>
    <property type="match status" value="1"/>
</dbReference>
<dbReference type="PROSITE" id="PS00828">
    <property type="entry name" value="RIBOSOMAL_L36"/>
    <property type="match status" value="1"/>
</dbReference>